<sequence>MDKKTARLSRSKRTRIKLRELGHTRLCVYRTPRHVYAQVISGDGSTVLVAASTVEKDVKAKCKYTGNVESAAIVGEIIADRCKEKGISQVAFDRSGYKYHGRVKALVEAAREHGLQF</sequence>
<comment type="function">
    <text evidence="1">This is one of the proteins that bind and probably mediate the attachment of the 5S RNA into the large ribosomal subunit, where it forms part of the central protuberance.</text>
</comment>
<comment type="subunit">
    <text evidence="1">Part of the 50S ribosomal subunit; part of the 5S rRNA/L5/L18/L25 subcomplex. Contacts the 5S and 23S rRNAs.</text>
</comment>
<comment type="similarity">
    <text evidence="1">Belongs to the universal ribosomal protein uL18 family.</text>
</comment>
<accession>Q5NHV2</accession>
<keyword id="KW-1185">Reference proteome</keyword>
<keyword id="KW-0687">Ribonucleoprotein</keyword>
<keyword id="KW-0689">Ribosomal protein</keyword>
<keyword id="KW-0694">RNA-binding</keyword>
<keyword id="KW-0699">rRNA-binding</keyword>
<dbReference type="EMBL" id="AJ749949">
    <property type="protein sequence ID" value="CAG44974.1"/>
    <property type="molecule type" value="Genomic_DNA"/>
</dbReference>
<dbReference type="RefSeq" id="WP_003014360.1">
    <property type="nucleotide sequence ID" value="NZ_CP010290.1"/>
</dbReference>
<dbReference type="RefSeq" id="YP_169390.1">
    <property type="nucleotide sequence ID" value="NC_006570.2"/>
</dbReference>
<dbReference type="SMR" id="Q5NHV2"/>
<dbReference type="STRING" id="177416.FTT_0341"/>
<dbReference type="DNASU" id="3192006"/>
<dbReference type="EnsemblBacteria" id="CAG44974">
    <property type="protein sequence ID" value="CAG44974"/>
    <property type="gene ID" value="FTT_0341"/>
</dbReference>
<dbReference type="KEGG" id="ftu:FTT_0341"/>
<dbReference type="eggNOG" id="COG0256">
    <property type="taxonomic scope" value="Bacteria"/>
</dbReference>
<dbReference type="OrthoDB" id="9810939at2"/>
<dbReference type="Proteomes" id="UP000001174">
    <property type="component" value="Chromosome"/>
</dbReference>
<dbReference type="GO" id="GO:0022625">
    <property type="term" value="C:cytosolic large ribosomal subunit"/>
    <property type="evidence" value="ECO:0007669"/>
    <property type="project" value="TreeGrafter"/>
</dbReference>
<dbReference type="GO" id="GO:0008097">
    <property type="term" value="F:5S rRNA binding"/>
    <property type="evidence" value="ECO:0007669"/>
    <property type="project" value="TreeGrafter"/>
</dbReference>
<dbReference type="GO" id="GO:0003735">
    <property type="term" value="F:structural constituent of ribosome"/>
    <property type="evidence" value="ECO:0007669"/>
    <property type="project" value="InterPro"/>
</dbReference>
<dbReference type="GO" id="GO:0006412">
    <property type="term" value="P:translation"/>
    <property type="evidence" value="ECO:0007669"/>
    <property type="project" value="UniProtKB-UniRule"/>
</dbReference>
<dbReference type="CDD" id="cd00432">
    <property type="entry name" value="Ribosomal_L18_L5e"/>
    <property type="match status" value="1"/>
</dbReference>
<dbReference type="FunFam" id="3.30.420.100:FF:000001">
    <property type="entry name" value="50S ribosomal protein L18"/>
    <property type="match status" value="1"/>
</dbReference>
<dbReference type="Gene3D" id="3.30.420.100">
    <property type="match status" value="1"/>
</dbReference>
<dbReference type="HAMAP" id="MF_01337_B">
    <property type="entry name" value="Ribosomal_uL18_B"/>
    <property type="match status" value="1"/>
</dbReference>
<dbReference type="InterPro" id="IPR004389">
    <property type="entry name" value="Ribosomal_uL18_bac-type"/>
</dbReference>
<dbReference type="InterPro" id="IPR005484">
    <property type="entry name" value="Ribosomal_uL18_bac/euk"/>
</dbReference>
<dbReference type="NCBIfam" id="TIGR00060">
    <property type="entry name" value="L18_bact"/>
    <property type="match status" value="1"/>
</dbReference>
<dbReference type="PANTHER" id="PTHR12899">
    <property type="entry name" value="39S RIBOSOMAL PROTEIN L18, MITOCHONDRIAL"/>
    <property type="match status" value="1"/>
</dbReference>
<dbReference type="PANTHER" id="PTHR12899:SF3">
    <property type="entry name" value="LARGE RIBOSOMAL SUBUNIT PROTEIN UL18M"/>
    <property type="match status" value="1"/>
</dbReference>
<dbReference type="Pfam" id="PF00861">
    <property type="entry name" value="Ribosomal_L18p"/>
    <property type="match status" value="1"/>
</dbReference>
<dbReference type="SUPFAM" id="SSF53137">
    <property type="entry name" value="Translational machinery components"/>
    <property type="match status" value="1"/>
</dbReference>
<feature type="chain" id="PRO_0000131265" description="Large ribosomal subunit protein uL18">
    <location>
        <begin position="1"/>
        <end position="117"/>
    </location>
</feature>
<protein>
    <recommendedName>
        <fullName evidence="1">Large ribosomal subunit protein uL18</fullName>
    </recommendedName>
    <alternativeName>
        <fullName evidence="2">50S ribosomal protein L18</fullName>
    </alternativeName>
</protein>
<reference key="1">
    <citation type="journal article" date="2005" name="Nat. Genet.">
        <title>The complete genome sequence of Francisella tularensis, the causative agent of tularemia.</title>
        <authorList>
            <person name="Larsson P."/>
            <person name="Oyston P.C.F."/>
            <person name="Chain P."/>
            <person name="Chu M.C."/>
            <person name="Duffield M."/>
            <person name="Fuxelius H.-H."/>
            <person name="Garcia E."/>
            <person name="Haelltorp G."/>
            <person name="Johansson D."/>
            <person name="Isherwood K.E."/>
            <person name="Karp P.D."/>
            <person name="Larsson E."/>
            <person name="Liu Y."/>
            <person name="Michell S."/>
            <person name="Prior J."/>
            <person name="Prior R."/>
            <person name="Malfatti S."/>
            <person name="Sjoestedt A."/>
            <person name="Svensson K."/>
            <person name="Thompson N."/>
            <person name="Vergez L."/>
            <person name="Wagg J.K."/>
            <person name="Wren B.W."/>
            <person name="Lindler L.E."/>
            <person name="Andersson S.G.E."/>
            <person name="Forsman M."/>
            <person name="Titball R.W."/>
        </authorList>
    </citation>
    <scope>NUCLEOTIDE SEQUENCE [LARGE SCALE GENOMIC DNA]</scope>
    <source>
        <strain>SCHU S4 / Schu 4</strain>
    </source>
</reference>
<proteinExistence type="inferred from homology"/>
<name>RL18_FRATT</name>
<organism>
    <name type="scientific">Francisella tularensis subsp. tularensis (strain SCHU S4 / Schu 4)</name>
    <dbReference type="NCBI Taxonomy" id="177416"/>
    <lineage>
        <taxon>Bacteria</taxon>
        <taxon>Pseudomonadati</taxon>
        <taxon>Pseudomonadota</taxon>
        <taxon>Gammaproteobacteria</taxon>
        <taxon>Thiotrichales</taxon>
        <taxon>Francisellaceae</taxon>
        <taxon>Francisella</taxon>
    </lineage>
</organism>
<gene>
    <name evidence="1" type="primary">rplR</name>
    <name type="ordered locus">FTT_0341</name>
</gene>
<evidence type="ECO:0000255" key="1">
    <source>
        <dbReference type="HAMAP-Rule" id="MF_01337"/>
    </source>
</evidence>
<evidence type="ECO:0000305" key="2"/>